<accession>B9E151</accession>
<keyword id="KW-0028">Amino-acid biosynthesis</keyword>
<keyword id="KW-0057">Aromatic amino acid biosynthesis</keyword>
<keyword id="KW-0456">Lyase</keyword>
<keyword id="KW-0663">Pyridoxal phosphate</keyword>
<keyword id="KW-0822">Tryptophan biosynthesis</keyword>
<evidence type="ECO:0000255" key="1">
    <source>
        <dbReference type="HAMAP-Rule" id="MF_00133"/>
    </source>
</evidence>
<sequence>MNKSYENSGRFGRFGGQYVPETVMTALMELEESFNKAKEDSKFIDEYMYYLQEYSGRPTPLYYAENLTKNLGGAKIYLKREDLNHTGAHKINNVLGQILLAKRMGKKKVIAETGAGQHGVAVATGAAMFQMECVIYMGEEDCRRQSLNVLRMKILGAKVVSVESGTKTLKDAVNEALRKWVENIEDTFYVMGSVVGPHPYPTMVRDFQRIIGDETKEQILKKEGKLPNYIIACVGGGSNSMGIFYPFVEDKSVKLIGVEAAGLGVDTDKHAASMAKGSVGVLHGMMTYLIQDDEGQILPVYSVSAGLDYPGVGPEHAYLKDTKRAEYTYVTDQEALDAFGYLSRCEGIIPALESSHALAYTMKLAPELSKEEIVVVNISGRGDKDVDTISELNIFG</sequence>
<dbReference type="EC" id="4.2.1.20" evidence="1"/>
<dbReference type="EMBL" id="AP009049">
    <property type="protein sequence ID" value="BAH06226.1"/>
    <property type="molecule type" value="Genomic_DNA"/>
</dbReference>
<dbReference type="RefSeq" id="WP_012101666.1">
    <property type="nucleotide sequence ID" value="NC_011837.1"/>
</dbReference>
<dbReference type="SMR" id="B9E151"/>
<dbReference type="KEGG" id="ckr:CKR_1175"/>
<dbReference type="HOGENOM" id="CLU_016734_3_1_9"/>
<dbReference type="UniPathway" id="UPA00035">
    <property type="reaction ID" value="UER00044"/>
</dbReference>
<dbReference type="Proteomes" id="UP000007969">
    <property type="component" value="Chromosome"/>
</dbReference>
<dbReference type="GO" id="GO:0005737">
    <property type="term" value="C:cytoplasm"/>
    <property type="evidence" value="ECO:0007669"/>
    <property type="project" value="TreeGrafter"/>
</dbReference>
<dbReference type="GO" id="GO:0004834">
    <property type="term" value="F:tryptophan synthase activity"/>
    <property type="evidence" value="ECO:0007669"/>
    <property type="project" value="UniProtKB-UniRule"/>
</dbReference>
<dbReference type="CDD" id="cd06446">
    <property type="entry name" value="Trp-synth_B"/>
    <property type="match status" value="1"/>
</dbReference>
<dbReference type="FunFam" id="3.40.50.1100:FF:000001">
    <property type="entry name" value="Tryptophan synthase beta chain"/>
    <property type="match status" value="1"/>
</dbReference>
<dbReference type="FunFam" id="3.40.50.1100:FF:000004">
    <property type="entry name" value="Tryptophan synthase beta chain"/>
    <property type="match status" value="1"/>
</dbReference>
<dbReference type="Gene3D" id="3.40.50.1100">
    <property type="match status" value="2"/>
</dbReference>
<dbReference type="HAMAP" id="MF_00133">
    <property type="entry name" value="Trp_synth_beta"/>
    <property type="match status" value="1"/>
</dbReference>
<dbReference type="InterPro" id="IPR006653">
    <property type="entry name" value="Trp_synth_b_CS"/>
</dbReference>
<dbReference type="InterPro" id="IPR006654">
    <property type="entry name" value="Trp_synth_beta"/>
</dbReference>
<dbReference type="InterPro" id="IPR023026">
    <property type="entry name" value="Trp_synth_beta/beta-like"/>
</dbReference>
<dbReference type="InterPro" id="IPR001926">
    <property type="entry name" value="TrpB-like_PALP"/>
</dbReference>
<dbReference type="InterPro" id="IPR036052">
    <property type="entry name" value="TrpB-like_PALP_sf"/>
</dbReference>
<dbReference type="NCBIfam" id="TIGR00263">
    <property type="entry name" value="trpB"/>
    <property type="match status" value="1"/>
</dbReference>
<dbReference type="PANTHER" id="PTHR48077:SF3">
    <property type="entry name" value="TRYPTOPHAN SYNTHASE"/>
    <property type="match status" value="1"/>
</dbReference>
<dbReference type="PANTHER" id="PTHR48077">
    <property type="entry name" value="TRYPTOPHAN SYNTHASE-RELATED"/>
    <property type="match status" value="1"/>
</dbReference>
<dbReference type="Pfam" id="PF00291">
    <property type="entry name" value="PALP"/>
    <property type="match status" value="1"/>
</dbReference>
<dbReference type="PIRSF" id="PIRSF001413">
    <property type="entry name" value="Trp_syn_beta"/>
    <property type="match status" value="1"/>
</dbReference>
<dbReference type="SUPFAM" id="SSF53686">
    <property type="entry name" value="Tryptophan synthase beta subunit-like PLP-dependent enzymes"/>
    <property type="match status" value="1"/>
</dbReference>
<dbReference type="PROSITE" id="PS00168">
    <property type="entry name" value="TRP_SYNTHASE_BETA"/>
    <property type="match status" value="1"/>
</dbReference>
<name>TRPB_CLOK1</name>
<protein>
    <recommendedName>
        <fullName evidence="1">Tryptophan synthase beta chain</fullName>
        <ecNumber evidence="1">4.2.1.20</ecNumber>
    </recommendedName>
</protein>
<organism>
    <name type="scientific">Clostridium kluyveri (strain NBRC 12016)</name>
    <dbReference type="NCBI Taxonomy" id="583346"/>
    <lineage>
        <taxon>Bacteria</taxon>
        <taxon>Bacillati</taxon>
        <taxon>Bacillota</taxon>
        <taxon>Clostridia</taxon>
        <taxon>Eubacteriales</taxon>
        <taxon>Clostridiaceae</taxon>
        <taxon>Clostridium</taxon>
    </lineage>
</organism>
<comment type="function">
    <text evidence="1">The beta subunit is responsible for the synthesis of L-tryptophan from indole and L-serine.</text>
</comment>
<comment type="catalytic activity">
    <reaction evidence="1">
        <text>(1S,2R)-1-C-(indol-3-yl)glycerol 3-phosphate + L-serine = D-glyceraldehyde 3-phosphate + L-tryptophan + H2O</text>
        <dbReference type="Rhea" id="RHEA:10532"/>
        <dbReference type="ChEBI" id="CHEBI:15377"/>
        <dbReference type="ChEBI" id="CHEBI:33384"/>
        <dbReference type="ChEBI" id="CHEBI:57912"/>
        <dbReference type="ChEBI" id="CHEBI:58866"/>
        <dbReference type="ChEBI" id="CHEBI:59776"/>
        <dbReference type="EC" id="4.2.1.20"/>
    </reaction>
</comment>
<comment type="cofactor">
    <cofactor evidence="1">
        <name>pyridoxal 5'-phosphate</name>
        <dbReference type="ChEBI" id="CHEBI:597326"/>
    </cofactor>
</comment>
<comment type="pathway">
    <text evidence="1">Amino-acid biosynthesis; L-tryptophan biosynthesis; L-tryptophan from chorismate: step 5/5.</text>
</comment>
<comment type="subunit">
    <text evidence="1">Tetramer of two alpha and two beta chains.</text>
</comment>
<comment type="similarity">
    <text evidence="1">Belongs to the TrpB family.</text>
</comment>
<feature type="chain" id="PRO_1000198742" description="Tryptophan synthase beta chain">
    <location>
        <begin position="1"/>
        <end position="396"/>
    </location>
</feature>
<feature type="modified residue" description="N6-(pyridoxal phosphate)lysine" evidence="1">
    <location>
        <position position="90"/>
    </location>
</feature>
<reference key="1">
    <citation type="submission" date="2005-09" db="EMBL/GenBank/DDBJ databases">
        <title>Complete genome sequence of Clostridium kluyveri and comparative genomics of Clostridia species.</title>
        <authorList>
            <person name="Inui M."/>
            <person name="Nonaka H."/>
            <person name="Shinoda Y."/>
            <person name="Ikenaga Y."/>
            <person name="Abe M."/>
            <person name="Naito K."/>
            <person name="Vertes A.A."/>
            <person name="Yukawa H."/>
        </authorList>
    </citation>
    <scope>NUCLEOTIDE SEQUENCE [LARGE SCALE GENOMIC DNA]</scope>
    <source>
        <strain>NBRC 12016</strain>
    </source>
</reference>
<proteinExistence type="inferred from homology"/>
<gene>
    <name evidence="1" type="primary">trpB</name>
    <name type="ordered locus">CKR_1175</name>
</gene>